<dbReference type="EMBL" id="AY100482">
    <property type="protein sequence ID" value="AAM49806.1"/>
    <property type="molecule type" value="Genomic_RNA"/>
</dbReference>
<dbReference type="SMR" id="Q8JMT1"/>
<dbReference type="Proteomes" id="UP000232449">
    <property type="component" value="Genome"/>
</dbReference>
<dbReference type="GO" id="GO:0044423">
    <property type="term" value="C:virion component"/>
    <property type="evidence" value="ECO:0007669"/>
    <property type="project" value="InterPro"/>
</dbReference>
<dbReference type="GO" id="GO:0003723">
    <property type="term" value="F:RNA binding"/>
    <property type="evidence" value="ECO:0007669"/>
    <property type="project" value="UniProtKB-KW"/>
</dbReference>
<dbReference type="GO" id="GO:0052170">
    <property type="term" value="P:symbiont-mediated suppression of host innate immune response"/>
    <property type="evidence" value="ECO:0007669"/>
    <property type="project" value="UniProtKB-KW"/>
</dbReference>
<dbReference type="Gene3D" id="3.30.390.180">
    <property type="entry name" value="RNA silencing suppressor P19"/>
    <property type="match status" value="1"/>
</dbReference>
<dbReference type="InterPro" id="IPR004905">
    <property type="entry name" value="Tombusvirus_p19"/>
</dbReference>
<dbReference type="InterPro" id="IPR036131">
    <property type="entry name" value="VP19_sf"/>
</dbReference>
<dbReference type="Pfam" id="PF03220">
    <property type="entry name" value="Tombus_P19"/>
    <property type="match status" value="1"/>
</dbReference>
<dbReference type="SUPFAM" id="SSF103145">
    <property type="entry name" value="Tombusvirus P19 core protein, VP19"/>
    <property type="match status" value="1"/>
</dbReference>
<sequence>MERAIQGSDAREQAYSERWDGGCGGTITPFKLPDESPSLIEWRLHNSEESEDKDNPLGFKESWSFGKVVFKRYLRYDGTEASLHRALGSWERDTVNNAASRFLGFGQIGCTYCIRFRGSCLTISGGSRTLQRLIEMAIRTKRTMLQLTPCEVEGNVSRGSPEGTEAFKEESE</sequence>
<proteinExistence type="inferred from homology"/>
<feature type="chain" id="PRO_0000222876" description="RNA silencing suppressor p19">
    <location>
        <begin position="1"/>
        <end position="172"/>
    </location>
</feature>
<feature type="region of interest" description="Disordered" evidence="2">
    <location>
        <begin position="153"/>
        <end position="172"/>
    </location>
</feature>
<gene>
    <name type="ORF">ORF4</name>
</gene>
<comment type="function">
    <text evidence="1">Viral suppressor of RNA silencing which binds specifically to silencing RNAs (siRNAs). Acts as a molecular caliper to specifically select siRNAs based on the length of the duplex region of the RNA (By similarity).</text>
</comment>
<comment type="subunit">
    <text evidence="1">Homodimer.</text>
</comment>
<comment type="similarity">
    <text evidence="3">Belongs to the tombusvirus protein p19 family.</text>
</comment>
<name>P19_PLV</name>
<keyword id="KW-0945">Host-virus interaction</keyword>
<keyword id="KW-1090">Inhibition of host innate immune response by virus</keyword>
<keyword id="KW-0694">RNA-binding</keyword>
<keyword id="KW-0941">Suppressor of RNA silencing</keyword>
<keyword id="KW-0899">Viral immunoevasion</keyword>
<accession>Q8JMT1</accession>
<organism>
    <name type="scientific">Pear latent virus</name>
    <name type="common">PeLV</name>
    <dbReference type="NCBI Taxonomy" id="197112"/>
    <lineage>
        <taxon>Viruses</taxon>
        <taxon>Riboviria</taxon>
        <taxon>Orthornavirae</taxon>
        <taxon>Kitrinoviricota</taxon>
        <taxon>Tolucaviricetes</taxon>
        <taxon>Tolivirales</taxon>
        <taxon>Tombusviridae</taxon>
        <taxon>Procedovirinae</taxon>
        <taxon>Tombusvirus</taxon>
        <taxon>Tombusvirus melongenae</taxon>
    </lineage>
</organism>
<protein>
    <recommendedName>
        <fullName>RNA silencing suppressor p19</fullName>
    </recommendedName>
    <alternativeName>
        <fullName>19 kDa symptom severity modulator</fullName>
    </alternativeName>
</protein>
<organismHost>
    <name type="scientific">Pyrus communis</name>
    <name type="common">Pear</name>
    <name type="synonym">Pyrus domestica</name>
    <dbReference type="NCBI Taxonomy" id="23211"/>
</organismHost>
<evidence type="ECO:0000250" key="1"/>
<evidence type="ECO:0000256" key="2">
    <source>
        <dbReference type="SAM" id="MobiDB-lite"/>
    </source>
</evidence>
<evidence type="ECO:0000305" key="3"/>
<reference key="1">
    <citation type="journal article" date="2002" name="J. Plant Pathol.">
        <title>Molecular characterization of a tombusvirus isolated from diseased pear trees in southern Italy.</title>
        <authorList>
            <person name="Russo M."/>
            <person name="Vovlas C."/>
            <person name="Rubino L."/>
            <person name="Grieco F."/>
            <person name="Martelli G.P."/>
        </authorList>
    </citation>
    <scope>NUCLEOTIDE SEQUENCE [GENOMIC RNA]</scope>
</reference>